<reference key="1">
    <citation type="journal article" date="1999" name="Brain Res. Mol. Brain Res.">
        <title>Discovery of a putative heme-binding protein family (SOUL/HBP) by two-tissue suppression subtractive hybridization and database searches.</title>
        <authorList>
            <person name="Zylka M.J."/>
            <person name="Reppert S.M."/>
        </authorList>
    </citation>
    <scope>NUCLEOTIDE SEQUENCE [MRNA]</scope>
</reference>
<reference key="2">
    <citation type="journal article" date="2005" name="Science">
        <title>The transcriptional landscape of the mammalian genome.</title>
        <authorList>
            <person name="Carninci P."/>
            <person name="Kasukawa T."/>
            <person name="Katayama S."/>
            <person name="Gough J."/>
            <person name="Frith M.C."/>
            <person name="Maeda N."/>
            <person name="Oyama R."/>
            <person name="Ravasi T."/>
            <person name="Lenhard B."/>
            <person name="Wells C."/>
            <person name="Kodzius R."/>
            <person name="Shimokawa K."/>
            <person name="Bajic V.B."/>
            <person name="Brenner S.E."/>
            <person name="Batalov S."/>
            <person name="Forrest A.R."/>
            <person name="Zavolan M."/>
            <person name="Davis M.J."/>
            <person name="Wilming L.G."/>
            <person name="Aidinis V."/>
            <person name="Allen J.E."/>
            <person name="Ambesi-Impiombato A."/>
            <person name="Apweiler R."/>
            <person name="Aturaliya R.N."/>
            <person name="Bailey T.L."/>
            <person name="Bansal M."/>
            <person name="Baxter L."/>
            <person name="Beisel K.W."/>
            <person name="Bersano T."/>
            <person name="Bono H."/>
            <person name="Chalk A.M."/>
            <person name="Chiu K.P."/>
            <person name="Choudhary V."/>
            <person name="Christoffels A."/>
            <person name="Clutterbuck D.R."/>
            <person name="Crowe M.L."/>
            <person name="Dalla E."/>
            <person name="Dalrymple B.P."/>
            <person name="de Bono B."/>
            <person name="Della Gatta G."/>
            <person name="di Bernardo D."/>
            <person name="Down T."/>
            <person name="Engstrom P."/>
            <person name="Fagiolini M."/>
            <person name="Faulkner G."/>
            <person name="Fletcher C.F."/>
            <person name="Fukushima T."/>
            <person name="Furuno M."/>
            <person name="Futaki S."/>
            <person name="Gariboldi M."/>
            <person name="Georgii-Hemming P."/>
            <person name="Gingeras T.R."/>
            <person name="Gojobori T."/>
            <person name="Green R.E."/>
            <person name="Gustincich S."/>
            <person name="Harbers M."/>
            <person name="Hayashi Y."/>
            <person name="Hensch T.K."/>
            <person name="Hirokawa N."/>
            <person name="Hill D."/>
            <person name="Huminiecki L."/>
            <person name="Iacono M."/>
            <person name="Ikeo K."/>
            <person name="Iwama A."/>
            <person name="Ishikawa T."/>
            <person name="Jakt M."/>
            <person name="Kanapin A."/>
            <person name="Katoh M."/>
            <person name="Kawasawa Y."/>
            <person name="Kelso J."/>
            <person name="Kitamura H."/>
            <person name="Kitano H."/>
            <person name="Kollias G."/>
            <person name="Krishnan S.P."/>
            <person name="Kruger A."/>
            <person name="Kummerfeld S.K."/>
            <person name="Kurochkin I.V."/>
            <person name="Lareau L.F."/>
            <person name="Lazarevic D."/>
            <person name="Lipovich L."/>
            <person name="Liu J."/>
            <person name="Liuni S."/>
            <person name="McWilliam S."/>
            <person name="Madan Babu M."/>
            <person name="Madera M."/>
            <person name="Marchionni L."/>
            <person name="Matsuda H."/>
            <person name="Matsuzawa S."/>
            <person name="Miki H."/>
            <person name="Mignone F."/>
            <person name="Miyake S."/>
            <person name="Morris K."/>
            <person name="Mottagui-Tabar S."/>
            <person name="Mulder N."/>
            <person name="Nakano N."/>
            <person name="Nakauchi H."/>
            <person name="Ng P."/>
            <person name="Nilsson R."/>
            <person name="Nishiguchi S."/>
            <person name="Nishikawa S."/>
            <person name="Nori F."/>
            <person name="Ohara O."/>
            <person name="Okazaki Y."/>
            <person name="Orlando V."/>
            <person name="Pang K.C."/>
            <person name="Pavan W.J."/>
            <person name="Pavesi G."/>
            <person name="Pesole G."/>
            <person name="Petrovsky N."/>
            <person name="Piazza S."/>
            <person name="Reed J."/>
            <person name="Reid J.F."/>
            <person name="Ring B.Z."/>
            <person name="Ringwald M."/>
            <person name="Rost B."/>
            <person name="Ruan Y."/>
            <person name="Salzberg S.L."/>
            <person name="Sandelin A."/>
            <person name="Schneider C."/>
            <person name="Schoenbach C."/>
            <person name="Sekiguchi K."/>
            <person name="Semple C.A."/>
            <person name="Seno S."/>
            <person name="Sessa L."/>
            <person name="Sheng Y."/>
            <person name="Shibata Y."/>
            <person name="Shimada H."/>
            <person name="Shimada K."/>
            <person name="Silva D."/>
            <person name="Sinclair B."/>
            <person name="Sperling S."/>
            <person name="Stupka E."/>
            <person name="Sugiura K."/>
            <person name="Sultana R."/>
            <person name="Takenaka Y."/>
            <person name="Taki K."/>
            <person name="Tammoja K."/>
            <person name="Tan S.L."/>
            <person name="Tang S."/>
            <person name="Taylor M.S."/>
            <person name="Tegner J."/>
            <person name="Teichmann S.A."/>
            <person name="Ueda H.R."/>
            <person name="van Nimwegen E."/>
            <person name="Verardo R."/>
            <person name="Wei C.L."/>
            <person name="Yagi K."/>
            <person name="Yamanishi H."/>
            <person name="Zabarovsky E."/>
            <person name="Zhu S."/>
            <person name="Zimmer A."/>
            <person name="Hide W."/>
            <person name="Bult C."/>
            <person name="Grimmond S.M."/>
            <person name="Teasdale R.D."/>
            <person name="Liu E.T."/>
            <person name="Brusic V."/>
            <person name="Quackenbush J."/>
            <person name="Wahlestedt C."/>
            <person name="Mattick J.S."/>
            <person name="Hume D.A."/>
            <person name="Kai C."/>
            <person name="Sasaki D."/>
            <person name="Tomaru Y."/>
            <person name="Fukuda S."/>
            <person name="Kanamori-Katayama M."/>
            <person name="Suzuki M."/>
            <person name="Aoki J."/>
            <person name="Arakawa T."/>
            <person name="Iida J."/>
            <person name="Imamura K."/>
            <person name="Itoh M."/>
            <person name="Kato T."/>
            <person name="Kawaji H."/>
            <person name="Kawagashira N."/>
            <person name="Kawashima T."/>
            <person name="Kojima M."/>
            <person name="Kondo S."/>
            <person name="Konno H."/>
            <person name="Nakano K."/>
            <person name="Ninomiya N."/>
            <person name="Nishio T."/>
            <person name="Okada M."/>
            <person name="Plessy C."/>
            <person name="Shibata K."/>
            <person name="Shiraki T."/>
            <person name="Suzuki S."/>
            <person name="Tagami M."/>
            <person name="Waki K."/>
            <person name="Watahiki A."/>
            <person name="Okamura-Oho Y."/>
            <person name="Suzuki H."/>
            <person name="Kawai J."/>
            <person name="Hayashizaki Y."/>
        </authorList>
    </citation>
    <scope>NUCLEOTIDE SEQUENCE [LARGE SCALE MRNA]</scope>
    <source>
        <strain>C57BL/6J</strain>
        <tissue>Medulla oblongata</tissue>
    </source>
</reference>
<reference key="3">
    <citation type="journal article" date="2004" name="Biochemistry">
        <title>SOUL in mouse eyes is a new hexameric heme-binding protein with characteristic optical absorption, resonance Raman spectral, and heme-binding properties.</title>
        <authorList>
            <person name="Sato E."/>
            <person name="Sagami I."/>
            <person name="Uchida T."/>
            <person name="Sato A."/>
            <person name="Kitagawa T."/>
            <person name="Igarashi J."/>
            <person name="Shimizu T."/>
        </authorList>
    </citation>
    <scope>FUNCTION AS HEME-BINDING PROTEIN</scope>
    <scope>MUTAGENESIS OF HIS-42</scope>
</reference>
<reference key="4">
    <citation type="journal article" date="2010" name="Cell">
        <title>A tissue-specific atlas of mouse protein phosphorylation and expression.</title>
        <authorList>
            <person name="Huttlin E.L."/>
            <person name="Jedrychowski M.P."/>
            <person name="Elias J.E."/>
            <person name="Goswami T."/>
            <person name="Rad R."/>
            <person name="Beausoleil S.A."/>
            <person name="Villen J."/>
            <person name="Haas W."/>
            <person name="Sowa M.E."/>
            <person name="Gygi S.P."/>
        </authorList>
    </citation>
    <scope>IDENTIFICATION BY MASS SPECTROMETRY [LARGE SCALE ANALYSIS]</scope>
    <source>
        <tissue>Brain</tissue>
        <tissue>Testis</tissue>
    </source>
</reference>
<protein>
    <recommendedName>
        <fullName>Heme-binding protein 2</fullName>
    </recommendedName>
    <alternativeName>
        <fullName>Protein SOUL</fullName>
    </alternativeName>
</protein>
<feature type="initiator methionine" description="Removed" evidence="1">
    <location>
        <position position="1"/>
    </location>
</feature>
<feature type="chain" id="PRO_0000116901" description="Heme-binding protein 2">
    <location>
        <begin position="2"/>
        <end position="205"/>
    </location>
</feature>
<feature type="region of interest" description="Disordered" evidence="2">
    <location>
        <begin position="1"/>
        <end position="37"/>
    </location>
</feature>
<feature type="modified residue" description="N-acetylalanine" evidence="1">
    <location>
        <position position="2"/>
    </location>
</feature>
<feature type="modified residue" description="Phosphoserine" evidence="1">
    <location>
        <position position="181"/>
    </location>
</feature>
<feature type="mutagenesis site" description="Loss of heme binding." evidence="3">
    <original>H</original>
    <variation>A</variation>
    <location>
        <position position="42"/>
    </location>
</feature>
<sequence length="205" mass="23063">MAEEPEPDLGVAEGSEDQALEMPSWKAPEDIDPQPGSYEIRHYGPAKWVSTCVESLDWDSAIQTGFTKLNGYIQGKNEKEMKIKLTAPVTSYVEPGSSPFSESTITISLYIPSEQQPDPPRPSESDVFIEDRAEMTVFVRSFDGFSSGQKNQEQLLTLANILREEGKVFNEKVFYTAGYSSPFQLLDRNNEVWLIQKNEPSVENK</sequence>
<gene>
    <name type="primary">Hebp2</name>
    <name type="synonym">Soul</name>
</gene>
<accession>Q9WU63</accession>
<name>HEBP2_MOUSE</name>
<dbReference type="EMBL" id="AF117614">
    <property type="protein sequence ID" value="AAD32097.1"/>
    <property type="molecule type" value="mRNA"/>
</dbReference>
<dbReference type="EMBL" id="AK078130">
    <property type="protein sequence ID" value="BAC37141.1"/>
    <property type="molecule type" value="mRNA"/>
</dbReference>
<dbReference type="CCDS" id="CCDS23711.1"/>
<dbReference type="RefSeq" id="NP_062360.1">
    <property type="nucleotide sequence ID" value="NM_019487.3"/>
</dbReference>
<dbReference type="SMR" id="Q9WU63"/>
<dbReference type="BioGRID" id="207771">
    <property type="interactions" value="2"/>
</dbReference>
<dbReference type="FunCoup" id="Q9WU63">
    <property type="interactions" value="614"/>
</dbReference>
<dbReference type="STRING" id="10090.ENSMUSP00000020000"/>
<dbReference type="PhosphoSitePlus" id="Q9WU63"/>
<dbReference type="PaxDb" id="10090-ENSMUSP00000020000"/>
<dbReference type="ProteomicsDB" id="270897"/>
<dbReference type="Pumba" id="Q9WU63"/>
<dbReference type="Antibodypedia" id="1915">
    <property type="antibodies" value="148 antibodies from 23 providers"/>
</dbReference>
<dbReference type="DNASU" id="56016"/>
<dbReference type="Ensembl" id="ENSMUST00000020000.7">
    <property type="protein sequence ID" value="ENSMUSP00000020000.6"/>
    <property type="gene ID" value="ENSMUSG00000019853.7"/>
</dbReference>
<dbReference type="GeneID" id="56016"/>
<dbReference type="KEGG" id="mmu:56016"/>
<dbReference type="UCSC" id="uc007emk.1">
    <property type="organism name" value="mouse"/>
</dbReference>
<dbReference type="AGR" id="MGI:1860084"/>
<dbReference type="CTD" id="23593"/>
<dbReference type="MGI" id="MGI:1860084">
    <property type="gene designation" value="Hebp2"/>
</dbReference>
<dbReference type="VEuPathDB" id="HostDB:ENSMUSG00000019853"/>
<dbReference type="eggNOG" id="ENOG502RXJR">
    <property type="taxonomic scope" value="Eukaryota"/>
</dbReference>
<dbReference type="GeneTree" id="ENSGT00940000160412"/>
<dbReference type="HOGENOM" id="CLU_068699_2_1_1"/>
<dbReference type="InParanoid" id="Q9WU63"/>
<dbReference type="OMA" id="YEIRTYH"/>
<dbReference type="OrthoDB" id="6424451at2759"/>
<dbReference type="PhylomeDB" id="Q9WU63"/>
<dbReference type="TreeFam" id="TF328887"/>
<dbReference type="Reactome" id="R-MMU-6798695">
    <property type="pathway name" value="Neutrophil degranulation"/>
</dbReference>
<dbReference type="BioGRID-ORCS" id="56016">
    <property type="hits" value="2 hits in 78 CRISPR screens"/>
</dbReference>
<dbReference type="PRO" id="PR:Q9WU63"/>
<dbReference type="Proteomes" id="UP000000589">
    <property type="component" value="Chromosome 10"/>
</dbReference>
<dbReference type="RNAct" id="Q9WU63">
    <property type="molecule type" value="protein"/>
</dbReference>
<dbReference type="Bgee" id="ENSMUSG00000019853">
    <property type="expression patterns" value="Expressed in facial nucleus and 190 other cell types or tissues"/>
</dbReference>
<dbReference type="ExpressionAtlas" id="Q9WU63">
    <property type="expression patterns" value="baseline and differential"/>
</dbReference>
<dbReference type="GO" id="GO:0005737">
    <property type="term" value="C:cytoplasm"/>
    <property type="evidence" value="ECO:0000314"/>
    <property type="project" value="MGI"/>
</dbReference>
<dbReference type="GO" id="GO:0005739">
    <property type="term" value="C:mitochondrion"/>
    <property type="evidence" value="ECO:0007669"/>
    <property type="project" value="UniProtKB-SubCell"/>
</dbReference>
<dbReference type="FunFam" id="3.20.80.10:FF:000006">
    <property type="entry name" value="heme-binding protein 2"/>
    <property type="match status" value="1"/>
</dbReference>
<dbReference type="Gene3D" id="3.20.80.10">
    <property type="entry name" value="Regulatory factor, effector binding domain"/>
    <property type="match status" value="1"/>
</dbReference>
<dbReference type="InterPro" id="IPR011256">
    <property type="entry name" value="Reg_factor_effector_dom_sf"/>
</dbReference>
<dbReference type="InterPro" id="IPR006917">
    <property type="entry name" value="SOUL_haem-bd"/>
</dbReference>
<dbReference type="PANTHER" id="PTHR11220:SF70">
    <property type="entry name" value="HEME-BINDING PROTEIN 2"/>
    <property type="match status" value="1"/>
</dbReference>
<dbReference type="PANTHER" id="PTHR11220">
    <property type="entry name" value="HEME-BINDING PROTEIN-RELATED"/>
    <property type="match status" value="1"/>
</dbReference>
<dbReference type="Pfam" id="PF04832">
    <property type="entry name" value="SOUL"/>
    <property type="match status" value="1"/>
</dbReference>
<dbReference type="SUPFAM" id="SSF55136">
    <property type="entry name" value="Probable bacterial effector-binding domain"/>
    <property type="match status" value="1"/>
</dbReference>
<keyword id="KW-0007">Acetylation</keyword>
<keyword id="KW-0963">Cytoplasm</keyword>
<keyword id="KW-0496">Mitochondrion</keyword>
<keyword id="KW-0597">Phosphoprotein</keyword>
<keyword id="KW-1185">Reference proteome</keyword>
<organism>
    <name type="scientific">Mus musculus</name>
    <name type="common">Mouse</name>
    <dbReference type="NCBI Taxonomy" id="10090"/>
    <lineage>
        <taxon>Eukaryota</taxon>
        <taxon>Metazoa</taxon>
        <taxon>Chordata</taxon>
        <taxon>Craniata</taxon>
        <taxon>Vertebrata</taxon>
        <taxon>Euteleostomi</taxon>
        <taxon>Mammalia</taxon>
        <taxon>Eutheria</taxon>
        <taxon>Euarchontoglires</taxon>
        <taxon>Glires</taxon>
        <taxon>Rodentia</taxon>
        <taxon>Myomorpha</taxon>
        <taxon>Muroidea</taxon>
        <taxon>Muridae</taxon>
        <taxon>Murinae</taxon>
        <taxon>Mus</taxon>
        <taxon>Mus</taxon>
    </lineage>
</organism>
<proteinExistence type="evidence at protein level"/>
<evidence type="ECO:0000250" key="1">
    <source>
        <dbReference type="UniProtKB" id="Q9Y5Z4"/>
    </source>
</evidence>
<evidence type="ECO:0000256" key="2">
    <source>
        <dbReference type="SAM" id="MobiDB-lite"/>
    </source>
</evidence>
<evidence type="ECO:0000269" key="3">
    <source>
    </source>
</evidence>
<evidence type="ECO:0000305" key="4"/>
<evidence type="ECO:0000305" key="5">
    <source>
    </source>
</evidence>
<comment type="function">
    <text evidence="1">Can promote mitochondrial permeability transition and facilitate necrotic cell death under different types of stress conditions (By similarity). May have low affinity for heme (PubMed:15518569).</text>
</comment>
<comment type="subunit">
    <text evidence="1">Monomer. Interacts with LRPPRC. May interact with BCL2L1; an interaction with BCL2L1 was observed using a peptide, but not with the full-length protein. The full-length protein would have to undergo a major conformation change for the interaction to occur. Interacts with PDCD6.</text>
</comment>
<comment type="subcellular location">
    <subcellularLocation>
        <location evidence="1">Cytoplasm</location>
    </subcellularLocation>
    <subcellularLocation>
        <location evidence="1">Mitochondrion</location>
    </subcellularLocation>
    <text evidence="1">Mainly localized to the cytoplasm with a much lower abundance in the mitochondrion.</text>
</comment>
<comment type="domain">
    <text evidence="1">Forms a distorted beta-barrel structure, with two helices that are packed against the outer surface of the barrel.</text>
</comment>
<comment type="similarity">
    <text evidence="4">Belongs to the HEBP family.</text>
</comment>
<comment type="caution">
    <text evidence="5">Has been described as heme-binding protein (PubMed:15518569) in mouse, but the human protein does not bind hemin. His-42, a residue essential for heme binding in mouse, is not conserved in all orthologs, or in the heme-binding family member HEBP1.</text>
</comment>